<protein>
    <recommendedName>
        <fullName evidence="1">Ribonuclease 3</fullName>
        <ecNumber evidence="1">3.1.26.3</ecNumber>
    </recommendedName>
    <alternativeName>
        <fullName evidence="1">Ribonuclease III</fullName>
        <shortName evidence="1">RNase III</shortName>
    </alternativeName>
</protein>
<evidence type="ECO:0000255" key="1">
    <source>
        <dbReference type="HAMAP-Rule" id="MF_00104"/>
    </source>
</evidence>
<feature type="chain" id="PRO_0000180431" description="Ribonuclease 3">
    <location>
        <begin position="1"/>
        <end position="248"/>
    </location>
</feature>
<feature type="domain" description="RNase III" evidence="1">
    <location>
        <begin position="15"/>
        <end position="142"/>
    </location>
</feature>
<feature type="domain" description="DRBM" evidence="1">
    <location>
        <begin position="169"/>
        <end position="240"/>
    </location>
</feature>
<feature type="active site" evidence="1">
    <location>
        <position position="59"/>
    </location>
</feature>
<feature type="active site" evidence="1">
    <location>
        <position position="131"/>
    </location>
</feature>
<feature type="binding site" evidence="1">
    <location>
        <position position="55"/>
    </location>
    <ligand>
        <name>Mg(2+)</name>
        <dbReference type="ChEBI" id="CHEBI:18420"/>
    </ligand>
</feature>
<feature type="binding site" evidence="1">
    <location>
        <position position="128"/>
    </location>
    <ligand>
        <name>Mg(2+)</name>
        <dbReference type="ChEBI" id="CHEBI:18420"/>
    </ligand>
</feature>
<feature type="binding site" evidence="1">
    <location>
        <position position="131"/>
    </location>
    <ligand>
        <name>Mg(2+)</name>
        <dbReference type="ChEBI" id="CHEBI:18420"/>
    </ligand>
</feature>
<accession>Q53844</accession>
<name>RNC_SPICI</name>
<keyword id="KW-0963">Cytoplasm</keyword>
<keyword id="KW-0255">Endonuclease</keyword>
<keyword id="KW-0378">Hydrolase</keyword>
<keyword id="KW-0460">Magnesium</keyword>
<keyword id="KW-0479">Metal-binding</keyword>
<keyword id="KW-0507">mRNA processing</keyword>
<keyword id="KW-0540">Nuclease</keyword>
<keyword id="KW-0694">RNA-binding</keyword>
<keyword id="KW-0698">rRNA processing</keyword>
<keyword id="KW-0699">rRNA-binding</keyword>
<keyword id="KW-0819">tRNA processing</keyword>
<reference key="1">
    <citation type="journal article" date="1996" name="Curr. Microbiol.">
        <title>Spiroplasma citri virus SpV1: characterization of viral sequences present in the spiroplasmal host chromosome.</title>
        <authorList>
            <person name="Bebear C.-M."/>
            <person name="Aullo P."/>
            <person name="Bove J.-M."/>
            <person name="Renaudin J."/>
        </authorList>
    </citation>
    <scope>NUCLEOTIDE SEQUENCE [GENOMIC DNA]</scope>
    <source>
        <strain>ATCC 27556 / NCPPB 2647 / R8A2</strain>
    </source>
</reference>
<organism>
    <name type="scientific">Spiroplasma citri</name>
    <dbReference type="NCBI Taxonomy" id="2133"/>
    <lineage>
        <taxon>Bacteria</taxon>
        <taxon>Bacillati</taxon>
        <taxon>Mycoplasmatota</taxon>
        <taxon>Mollicutes</taxon>
        <taxon>Entomoplasmatales</taxon>
        <taxon>Spiroplasmataceae</taxon>
        <taxon>Spiroplasma</taxon>
    </lineage>
</organism>
<sequence length="248" mass="28931">MQFINKQSEQLFIELKAFFKQYHVFIKERQYYLEALTHNSYANEHNLSYTYQRMEFLGDAILAKEISLYLFLSFPDKNEGEITNLRSKIVREGTLAELVRRMNWAPFLLLGKGEIKTKGYEKNRILADIYESMIAALYLDLGEDVVRTFINNTLIRMVSNPGFFDKIRDYKTELQEFLQAGDARTLEYKLIKESQPLEGNRVLYTVVAEIGGIRYGEGCGYTHKEAEQLAARDALQKLATKSKYHFEK</sequence>
<comment type="function">
    <text evidence="1">Digests double-stranded RNA. Involved in the processing of primary rRNA transcript to yield the immediate precursors to the large and small rRNAs (23S and 16S). Processes some mRNAs, and tRNAs when they are encoded in the rRNA operon. Processes pre-crRNA and tracrRNA of type II CRISPR loci if present in the organism.</text>
</comment>
<comment type="catalytic activity">
    <reaction evidence="1">
        <text>Endonucleolytic cleavage to 5'-phosphomonoester.</text>
        <dbReference type="EC" id="3.1.26.3"/>
    </reaction>
</comment>
<comment type="cofactor">
    <cofactor evidence="1">
        <name>Mg(2+)</name>
        <dbReference type="ChEBI" id="CHEBI:18420"/>
    </cofactor>
</comment>
<comment type="subunit">
    <text evidence="1">Homodimer.</text>
</comment>
<comment type="subcellular location">
    <subcellularLocation>
        <location evidence="1">Cytoplasm</location>
    </subcellularLocation>
</comment>
<comment type="similarity">
    <text evidence="1">Belongs to the ribonuclease III family.</text>
</comment>
<proteinExistence type="inferred from homology"/>
<gene>
    <name evidence="1" type="primary">rnc</name>
</gene>
<dbReference type="EC" id="3.1.26.3" evidence="1"/>
<dbReference type="EMBL" id="U28972">
    <property type="protein sequence ID" value="AAA84999.1"/>
    <property type="molecule type" value="Genomic_DNA"/>
</dbReference>
<dbReference type="RefSeq" id="WP_071937898.1">
    <property type="nucleotide sequence ID" value="NZ_CP013197.1"/>
</dbReference>
<dbReference type="SMR" id="Q53844"/>
<dbReference type="STRING" id="2133.SCITRI_001686"/>
<dbReference type="GeneID" id="54239520"/>
<dbReference type="OrthoDB" id="9805026at2"/>
<dbReference type="GO" id="GO:0005737">
    <property type="term" value="C:cytoplasm"/>
    <property type="evidence" value="ECO:0007669"/>
    <property type="project" value="UniProtKB-SubCell"/>
</dbReference>
<dbReference type="GO" id="GO:0003725">
    <property type="term" value="F:double-stranded RNA binding"/>
    <property type="evidence" value="ECO:0007669"/>
    <property type="project" value="TreeGrafter"/>
</dbReference>
<dbReference type="GO" id="GO:0046872">
    <property type="term" value="F:metal ion binding"/>
    <property type="evidence" value="ECO:0007669"/>
    <property type="project" value="UniProtKB-KW"/>
</dbReference>
<dbReference type="GO" id="GO:0004525">
    <property type="term" value="F:ribonuclease III activity"/>
    <property type="evidence" value="ECO:0007669"/>
    <property type="project" value="UniProtKB-UniRule"/>
</dbReference>
<dbReference type="GO" id="GO:0019843">
    <property type="term" value="F:rRNA binding"/>
    <property type="evidence" value="ECO:0007669"/>
    <property type="project" value="UniProtKB-KW"/>
</dbReference>
<dbReference type="GO" id="GO:0006397">
    <property type="term" value="P:mRNA processing"/>
    <property type="evidence" value="ECO:0007669"/>
    <property type="project" value="UniProtKB-UniRule"/>
</dbReference>
<dbReference type="GO" id="GO:0010468">
    <property type="term" value="P:regulation of gene expression"/>
    <property type="evidence" value="ECO:0007669"/>
    <property type="project" value="TreeGrafter"/>
</dbReference>
<dbReference type="GO" id="GO:0006364">
    <property type="term" value="P:rRNA processing"/>
    <property type="evidence" value="ECO:0007669"/>
    <property type="project" value="UniProtKB-UniRule"/>
</dbReference>
<dbReference type="GO" id="GO:0008033">
    <property type="term" value="P:tRNA processing"/>
    <property type="evidence" value="ECO:0007669"/>
    <property type="project" value="UniProtKB-KW"/>
</dbReference>
<dbReference type="CDD" id="cd10845">
    <property type="entry name" value="DSRM_RNAse_III_family"/>
    <property type="match status" value="1"/>
</dbReference>
<dbReference type="CDD" id="cd00593">
    <property type="entry name" value="RIBOc"/>
    <property type="match status" value="1"/>
</dbReference>
<dbReference type="FunFam" id="1.10.1520.10:FF:000001">
    <property type="entry name" value="Ribonuclease 3"/>
    <property type="match status" value="1"/>
</dbReference>
<dbReference type="Gene3D" id="3.30.160.20">
    <property type="match status" value="1"/>
</dbReference>
<dbReference type="Gene3D" id="1.10.1520.10">
    <property type="entry name" value="Ribonuclease III domain"/>
    <property type="match status" value="1"/>
</dbReference>
<dbReference type="HAMAP" id="MF_00104">
    <property type="entry name" value="RNase_III"/>
    <property type="match status" value="1"/>
</dbReference>
<dbReference type="InterPro" id="IPR014720">
    <property type="entry name" value="dsRBD_dom"/>
</dbReference>
<dbReference type="InterPro" id="IPR011907">
    <property type="entry name" value="RNase_III"/>
</dbReference>
<dbReference type="InterPro" id="IPR000999">
    <property type="entry name" value="RNase_III_dom"/>
</dbReference>
<dbReference type="InterPro" id="IPR036389">
    <property type="entry name" value="RNase_III_sf"/>
</dbReference>
<dbReference type="NCBIfam" id="TIGR02191">
    <property type="entry name" value="RNaseIII"/>
    <property type="match status" value="1"/>
</dbReference>
<dbReference type="PANTHER" id="PTHR11207:SF0">
    <property type="entry name" value="RIBONUCLEASE 3"/>
    <property type="match status" value="1"/>
</dbReference>
<dbReference type="PANTHER" id="PTHR11207">
    <property type="entry name" value="RIBONUCLEASE III"/>
    <property type="match status" value="1"/>
</dbReference>
<dbReference type="Pfam" id="PF00035">
    <property type="entry name" value="dsrm"/>
    <property type="match status" value="1"/>
</dbReference>
<dbReference type="Pfam" id="PF14622">
    <property type="entry name" value="Ribonucleas_3_3"/>
    <property type="match status" value="1"/>
</dbReference>
<dbReference type="SMART" id="SM00358">
    <property type="entry name" value="DSRM"/>
    <property type="match status" value="1"/>
</dbReference>
<dbReference type="SMART" id="SM00535">
    <property type="entry name" value="RIBOc"/>
    <property type="match status" value="1"/>
</dbReference>
<dbReference type="SUPFAM" id="SSF54768">
    <property type="entry name" value="dsRNA-binding domain-like"/>
    <property type="match status" value="1"/>
</dbReference>
<dbReference type="SUPFAM" id="SSF69065">
    <property type="entry name" value="RNase III domain-like"/>
    <property type="match status" value="1"/>
</dbReference>
<dbReference type="PROSITE" id="PS50137">
    <property type="entry name" value="DS_RBD"/>
    <property type="match status" value="1"/>
</dbReference>
<dbReference type="PROSITE" id="PS00517">
    <property type="entry name" value="RNASE_3_1"/>
    <property type="match status" value="1"/>
</dbReference>
<dbReference type="PROSITE" id="PS50142">
    <property type="entry name" value="RNASE_3_2"/>
    <property type="match status" value="1"/>
</dbReference>